<comment type="function">
    <text evidence="3">Member of the two-component regulatory system WalK/WalR that regulates genes involved in cell wall metabolism, virulence regulation, biofilm production, oxidative stress resistance and antibiotic resistance via direct or indirect regulation of autolysins. Functions as a sensor protein kinase which is autophosphorylated at a histidine residue in the dimerization domain and transfers its phosphate group to the conserved aspartic acid residue in the regulatory domain of WalR. In turn, WalR binds to the upstream promoter regions of the target genes to positively and negatively regulate their expression.</text>
</comment>
<comment type="catalytic activity">
    <reaction evidence="3">
        <text>ATP + protein L-histidine = ADP + protein N-phospho-L-histidine.</text>
        <dbReference type="EC" id="2.7.13.3"/>
    </reaction>
</comment>
<comment type="activity regulation">
    <text evidence="3">By zinc. Zinc-binding negatively regulates WalK kinase activity and thus autophosphorylation.</text>
</comment>
<comment type="subunit">
    <text evidence="2">Forms homodimers. Forms homooligomers.</text>
</comment>
<comment type="subcellular location">
    <subcellularLocation>
        <location evidence="9">Cell membrane</location>
        <topology evidence="4">Multi-pass membrane protein</topology>
    </subcellularLocation>
    <subcellularLocation>
        <location evidence="9">Membrane raft</location>
        <topology evidence="4">Multi-pass membrane protein</topology>
    </subcellularLocation>
    <text evidence="9">Present in detergent-resistant membrane (DRM) fractions that may be equivalent to eukaryotic membrane rafts; these rafts include proteins involved in signaling, molecule trafficking and protein secretion.</text>
</comment>
<comment type="PTM">
    <text evidence="3">Autophosphorylated.</text>
</comment>
<sequence>MKWLKQLQSLHTKLVIVYVLLIIIGMQIIGLYFTNNLEKELLDNFKKNITQYAKQLEISIEKVYDEKGSVNAQKDIQNLLSEYANRQEIGEIRFIDKDQIIIATTKQSNRSLINQKANDSSVQKALSLGQSNDHLILKDYGGGKDRVWVYNIPVKVDKKVIGNIYIESKINDVYNQLNNINQIFIVGTAISLLITVILGFFIARTITKPITDMRNQTVEMSRGNYTQRVKIYGNDEIGELALAFNNLSKRVQEAQANTESEKRRLDSVITHMSDGIIATDRRGRIRIVNDMALKMLGMAKEDIIGYYMLSVLSLEDEFKLEEIQENNDSFLLDLNEEEGLIARVNFSTIVQETGFVTGYIAVLHDVTEQQQVERERREFVANVSHELRTPLTSMNSYIEALEEGAWKDEELAPQFLSVTREETERMIRLVNDLLQLSKMDNESDQINKEIIDFNMFINKIINRHEMSAKDTTFIRDIPKKTIFTEFDPDKMTQVFDNVITNAMKYSRGDKRVEFHVKQNPLYNRMTIRIKDNGIGIPINKVDKIFDRFYRVDKARTRKMGGTGLGLAISKEIVEAHNGRIWANSVEGQGTSIFITLPCEVIEDGDWDE</sequence>
<organism>
    <name type="scientific">Staphylococcus aureus (strain N315)</name>
    <dbReference type="NCBI Taxonomy" id="158879"/>
    <lineage>
        <taxon>Bacteria</taxon>
        <taxon>Bacillati</taxon>
        <taxon>Bacillota</taxon>
        <taxon>Bacilli</taxon>
        <taxon>Bacillales</taxon>
        <taxon>Staphylococcaceae</taxon>
        <taxon>Staphylococcus</taxon>
    </lineage>
</organism>
<accession>Q7A8E0</accession>
<protein>
    <recommendedName>
        <fullName evidence="10">Sensor protein kinase WalK</fullName>
        <ecNumber evidence="1">2.7.13.3</ecNumber>
    </recommendedName>
</protein>
<gene>
    <name type="primary">walK</name>
    <name type="synonym">vicK</name>
    <name type="ordered locus">SA0018</name>
</gene>
<proteinExistence type="evidence at protein level"/>
<name>WALK_STAAN</name>
<keyword id="KW-0067">ATP-binding</keyword>
<keyword id="KW-1003">Cell membrane</keyword>
<keyword id="KW-0418">Kinase</keyword>
<keyword id="KW-0472">Membrane</keyword>
<keyword id="KW-0479">Metal-binding</keyword>
<keyword id="KW-0547">Nucleotide-binding</keyword>
<keyword id="KW-0597">Phosphoprotein</keyword>
<keyword id="KW-0808">Transferase</keyword>
<keyword id="KW-0812">Transmembrane</keyword>
<keyword id="KW-1133">Transmembrane helix</keyword>
<keyword id="KW-0902">Two-component regulatory system</keyword>
<keyword id="KW-0862">Zinc</keyword>
<reference key="1">
    <citation type="journal article" date="2001" name="Lancet">
        <title>Whole genome sequencing of meticillin-resistant Staphylococcus aureus.</title>
        <authorList>
            <person name="Kuroda M."/>
            <person name="Ohta T."/>
            <person name="Uchiyama I."/>
            <person name="Baba T."/>
            <person name="Yuzawa H."/>
            <person name="Kobayashi I."/>
            <person name="Cui L."/>
            <person name="Oguchi A."/>
            <person name="Aoki K."/>
            <person name="Nagai Y."/>
            <person name="Lian J.-Q."/>
            <person name="Ito T."/>
            <person name="Kanamori M."/>
            <person name="Matsumaru H."/>
            <person name="Maruyama A."/>
            <person name="Murakami H."/>
            <person name="Hosoyama A."/>
            <person name="Mizutani-Ui Y."/>
            <person name="Takahashi N.K."/>
            <person name="Sawano T."/>
            <person name="Inoue R."/>
            <person name="Kaito C."/>
            <person name="Sekimizu K."/>
            <person name="Hirakawa H."/>
            <person name="Kuhara S."/>
            <person name="Goto S."/>
            <person name="Yabuzaki J."/>
            <person name="Kanehisa M."/>
            <person name="Yamashita A."/>
            <person name="Oshima K."/>
            <person name="Furuya K."/>
            <person name="Yoshino C."/>
            <person name="Shiba T."/>
            <person name="Hattori M."/>
            <person name="Ogasawara N."/>
            <person name="Hayashi H."/>
            <person name="Hiramatsu K."/>
        </authorList>
    </citation>
    <scope>NUCLEOTIDE SEQUENCE [LARGE SCALE GENOMIC DNA]</scope>
    <source>
        <strain>N315</strain>
    </source>
</reference>
<reference key="2">
    <citation type="submission" date="2007-10" db="UniProtKB">
        <title>Shotgun proteomic analysis of total and membrane protein extracts of S. aureus strain N315.</title>
        <authorList>
            <person name="Vaezzadeh A.R."/>
            <person name="Deshusses J."/>
            <person name="Lescuyer P."/>
            <person name="Hochstrasser D.F."/>
        </authorList>
    </citation>
    <scope>IDENTIFICATION BY MASS SPECTROMETRY [LARGE SCALE ANALYSIS]</scope>
    <source>
        <strain>N315</strain>
    </source>
</reference>
<reference key="3">
    <citation type="journal article" date="2010" name="Genes Dev.">
        <title>Functional microdomains in bacterial membranes.</title>
        <authorList>
            <person name="Lopez D."/>
            <person name="Kolter R."/>
        </authorList>
    </citation>
    <scope>IDENTIFICATION BY MASS SPECTROMETRY</scope>
    <scope>SUBCELLULAR LOCATION</scope>
</reference>
<evidence type="ECO:0000250" key="1">
    <source>
        <dbReference type="UniProtKB" id="O34206"/>
    </source>
</evidence>
<evidence type="ECO:0000250" key="2">
    <source>
        <dbReference type="UniProtKB" id="Q2G2U4"/>
    </source>
</evidence>
<evidence type="ECO:0000250" key="3">
    <source>
        <dbReference type="UniProtKB" id="Q9RDT3"/>
    </source>
</evidence>
<evidence type="ECO:0000255" key="4"/>
<evidence type="ECO:0000255" key="5">
    <source>
        <dbReference type="PROSITE-ProRule" id="PRU00102"/>
    </source>
</evidence>
<evidence type="ECO:0000255" key="6">
    <source>
        <dbReference type="PROSITE-ProRule" id="PRU00107"/>
    </source>
</evidence>
<evidence type="ECO:0000255" key="7">
    <source>
        <dbReference type="PROSITE-ProRule" id="PRU00140"/>
    </source>
</evidence>
<evidence type="ECO:0000255" key="8">
    <source>
        <dbReference type="PROSITE-ProRule" id="PRU00141"/>
    </source>
</evidence>
<evidence type="ECO:0000269" key="9">
    <source>
    </source>
</evidence>
<evidence type="ECO:0000305" key="10"/>
<dbReference type="EC" id="2.7.13.3" evidence="1"/>
<dbReference type="EMBL" id="BA000018">
    <property type="protein sequence ID" value="BAB41235.1"/>
    <property type="molecule type" value="Genomic_DNA"/>
</dbReference>
<dbReference type="PIR" id="C89760">
    <property type="entry name" value="C89760"/>
</dbReference>
<dbReference type="RefSeq" id="WP_000871607.1">
    <property type="nucleotide sequence ID" value="NC_002745.2"/>
</dbReference>
<dbReference type="SMR" id="Q7A8E0"/>
<dbReference type="EnsemblBacteria" id="BAB41235">
    <property type="protein sequence ID" value="BAB41235"/>
    <property type="gene ID" value="BAB41235"/>
</dbReference>
<dbReference type="KEGG" id="sau:SA0018"/>
<dbReference type="HOGENOM" id="CLU_000445_89_2_9"/>
<dbReference type="GO" id="GO:0045121">
    <property type="term" value="C:membrane raft"/>
    <property type="evidence" value="ECO:0007669"/>
    <property type="project" value="UniProtKB-SubCell"/>
</dbReference>
<dbReference type="GO" id="GO:0005886">
    <property type="term" value="C:plasma membrane"/>
    <property type="evidence" value="ECO:0007669"/>
    <property type="project" value="UniProtKB-SubCell"/>
</dbReference>
<dbReference type="GO" id="GO:0005524">
    <property type="term" value="F:ATP binding"/>
    <property type="evidence" value="ECO:0007669"/>
    <property type="project" value="UniProtKB-KW"/>
</dbReference>
<dbReference type="GO" id="GO:0046872">
    <property type="term" value="F:metal ion binding"/>
    <property type="evidence" value="ECO:0007669"/>
    <property type="project" value="UniProtKB-KW"/>
</dbReference>
<dbReference type="GO" id="GO:0000156">
    <property type="term" value="F:phosphorelay response regulator activity"/>
    <property type="evidence" value="ECO:0007669"/>
    <property type="project" value="TreeGrafter"/>
</dbReference>
<dbReference type="GO" id="GO:0000155">
    <property type="term" value="F:phosphorelay sensor kinase activity"/>
    <property type="evidence" value="ECO:0007669"/>
    <property type="project" value="InterPro"/>
</dbReference>
<dbReference type="GO" id="GO:0030295">
    <property type="term" value="F:protein kinase activator activity"/>
    <property type="evidence" value="ECO:0007669"/>
    <property type="project" value="TreeGrafter"/>
</dbReference>
<dbReference type="GO" id="GO:0007234">
    <property type="term" value="P:osmosensory signaling via phosphorelay pathway"/>
    <property type="evidence" value="ECO:0007669"/>
    <property type="project" value="TreeGrafter"/>
</dbReference>
<dbReference type="CDD" id="cd06225">
    <property type="entry name" value="HAMP"/>
    <property type="match status" value="1"/>
</dbReference>
<dbReference type="CDD" id="cd00075">
    <property type="entry name" value="HATPase"/>
    <property type="match status" value="1"/>
</dbReference>
<dbReference type="CDD" id="cd00082">
    <property type="entry name" value="HisKA"/>
    <property type="match status" value="1"/>
</dbReference>
<dbReference type="CDD" id="cd00130">
    <property type="entry name" value="PAS"/>
    <property type="match status" value="1"/>
</dbReference>
<dbReference type="FunFam" id="1.10.8.500:FF:000001">
    <property type="entry name" value="Cell wall metabolism sensor histidine kinase"/>
    <property type="match status" value="1"/>
</dbReference>
<dbReference type="FunFam" id="3.30.450.20:FF:000037">
    <property type="entry name" value="Cell wall metabolism sensor histidine kinase"/>
    <property type="match status" value="1"/>
</dbReference>
<dbReference type="FunFam" id="3.30.565.10:FF:000006">
    <property type="entry name" value="Sensor histidine kinase WalK"/>
    <property type="match status" value="1"/>
</dbReference>
<dbReference type="FunFam" id="1.10.287.130:FF:000001">
    <property type="entry name" value="Two-component sensor histidine kinase"/>
    <property type="match status" value="1"/>
</dbReference>
<dbReference type="Gene3D" id="1.10.287.130">
    <property type="match status" value="1"/>
</dbReference>
<dbReference type="Gene3D" id="1.10.8.500">
    <property type="entry name" value="HAMP domain in histidine kinase"/>
    <property type="match status" value="1"/>
</dbReference>
<dbReference type="Gene3D" id="3.30.565.10">
    <property type="entry name" value="Histidine kinase-like ATPase, C-terminal domain"/>
    <property type="match status" value="1"/>
</dbReference>
<dbReference type="Gene3D" id="3.30.450.20">
    <property type="entry name" value="PAS domain"/>
    <property type="match status" value="2"/>
</dbReference>
<dbReference type="InterPro" id="IPR003660">
    <property type="entry name" value="HAMP_dom"/>
</dbReference>
<dbReference type="InterPro" id="IPR036890">
    <property type="entry name" value="HATPase_C_sf"/>
</dbReference>
<dbReference type="InterPro" id="IPR005467">
    <property type="entry name" value="His_kinase_dom"/>
</dbReference>
<dbReference type="InterPro" id="IPR003661">
    <property type="entry name" value="HisK_dim/P_dom"/>
</dbReference>
<dbReference type="InterPro" id="IPR036097">
    <property type="entry name" value="HisK_dim/P_sf"/>
</dbReference>
<dbReference type="InterPro" id="IPR052545">
    <property type="entry name" value="Light-responsive_reg"/>
</dbReference>
<dbReference type="InterPro" id="IPR000014">
    <property type="entry name" value="PAS"/>
</dbReference>
<dbReference type="InterPro" id="IPR000700">
    <property type="entry name" value="PAS-assoc_C"/>
</dbReference>
<dbReference type="InterPro" id="IPR035965">
    <property type="entry name" value="PAS-like_dom_sf"/>
</dbReference>
<dbReference type="InterPro" id="IPR049814">
    <property type="entry name" value="Resp_reg_WalK"/>
</dbReference>
<dbReference type="InterPro" id="IPR029151">
    <property type="entry name" value="Sensor-like_sf"/>
</dbReference>
<dbReference type="InterPro" id="IPR004358">
    <property type="entry name" value="Sig_transdc_His_kin-like_C"/>
</dbReference>
<dbReference type="NCBIfam" id="NF033092">
    <property type="entry name" value="HK_WalK"/>
    <property type="match status" value="1"/>
</dbReference>
<dbReference type="NCBIfam" id="TIGR00229">
    <property type="entry name" value="sensory_box"/>
    <property type="match status" value="1"/>
</dbReference>
<dbReference type="PANTHER" id="PTHR42878:SF7">
    <property type="entry name" value="SENSOR HISTIDINE KINASE GLRK"/>
    <property type="match status" value="1"/>
</dbReference>
<dbReference type="PANTHER" id="PTHR42878">
    <property type="entry name" value="TWO-COMPONENT HISTIDINE KINASE"/>
    <property type="match status" value="1"/>
</dbReference>
<dbReference type="Pfam" id="PF23846">
    <property type="entry name" value="Cache_WalK"/>
    <property type="match status" value="1"/>
</dbReference>
<dbReference type="Pfam" id="PF00672">
    <property type="entry name" value="HAMP"/>
    <property type="match status" value="1"/>
</dbReference>
<dbReference type="Pfam" id="PF02518">
    <property type="entry name" value="HATPase_c"/>
    <property type="match status" value="1"/>
</dbReference>
<dbReference type="Pfam" id="PF00512">
    <property type="entry name" value="HisKA"/>
    <property type="match status" value="1"/>
</dbReference>
<dbReference type="Pfam" id="PF13426">
    <property type="entry name" value="PAS_9"/>
    <property type="match status" value="1"/>
</dbReference>
<dbReference type="PRINTS" id="PR00344">
    <property type="entry name" value="BCTRLSENSOR"/>
</dbReference>
<dbReference type="SMART" id="SM00304">
    <property type="entry name" value="HAMP"/>
    <property type="match status" value="1"/>
</dbReference>
<dbReference type="SMART" id="SM00387">
    <property type="entry name" value="HATPase_c"/>
    <property type="match status" value="1"/>
</dbReference>
<dbReference type="SMART" id="SM00388">
    <property type="entry name" value="HisKA"/>
    <property type="match status" value="1"/>
</dbReference>
<dbReference type="SMART" id="SM00091">
    <property type="entry name" value="PAS"/>
    <property type="match status" value="1"/>
</dbReference>
<dbReference type="SUPFAM" id="SSF55874">
    <property type="entry name" value="ATPase domain of HSP90 chaperone/DNA topoisomerase II/histidine kinase"/>
    <property type="match status" value="1"/>
</dbReference>
<dbReference type="SUPFAM" id="SSF158472">
    <property type="entry name" value="HAMP domain-like"/>
    <property type="match status" value="1"/>
</dbReference>
<dbReference type="SUPFAM" id="SSF47384">
    <property type="entry name" value="Homodimeric domain of signal transducing histidine kinase"/>
    <property type="match status" value="1"/>
</dbReference>
<dbReference type="SUPFAM" id="SSF55785">
    <property type="entry name" value="PYP-like sensor domain (PAS domain)"/>
    <property type="match status" value="1"/>
</dbReference>
<dbReference type="SUPFAM" id="SSF103190">
    <property type="entry name" value="Sensory domain-like"/>
    <property type="match status" value="1"/>
</dbReference>
<dbReference type="PROSITE" id="PS50885">
    <property type="entry name" value="HAMP"/>
    <property type="match status" value="1"/>
</dbReference>
<dbReference type="PROSITE" id="PS50109">
    <property type="entry name" value="HIS_KIN"/>
    <property type="match status" value="1"/>
</dbReference>
<dbReference type="PROSITE" id="PS50113">
    <property type="entry name" value="PAC"/>
    <property type="match status" value="1"/>
</dbReference>
<dbReference type="PROSITE" id="PS50112">
    <property type="entry name" value="PAS"/>
    <property type="match status" value="1"/>
</dbReference>
<feature type="chain" id="PRO_0000353060" description="Sensor protein kinase WalK">
    <location>
        <begin position="1"/>
        <end position="608"/>
    </location>
</feature>
<feature type="transmembrane region" description="Helical" evidence="4">
    <location>
        <begin position="14"/>
        <end position="34"/>
    </location>
</feature>
<feature type="transmembrane region" description="Helical" evidence="4">
    <location>
        <begin position="183"/>
        <end position="203"/>
    </location>
</feature>
<feature type="domain" description="HAMP" evidence="5">
    <location>
        <begin position="204"/>
        <end position="256"/>
    </location>
</feature>
<feature type="domain" description="PAS" evidence="7">
    <location>
        <begin position="261"/>
        <end position="331"/>
    </location>
</feature>
<feature type="domain" description="PAC" evidence="8">
    <location>
        <begin position="314"/>
        <end position="378"/>
    </location>
</feature>
<feature type="domain" description="Histidine kinase" evidence="6">
    <location>
        <begin position="382"/>
        <end position="600"/>
    </location>
</feature>
<feature type="binding site" evidence="3">
    <location>
        <position position="271"/>
    </location>
    <ligand>
        <name>Zn(2+)</name>
        <dbReference type="ChEBI" id="CHEBI:29105"/>
    </ligand>
</feature>
<feature type="binding site" evidence="3">
    <location>
        <position position="274"/>
    </location>
    <ligand>
        <name>Zn(2+)</name>
        <dbReference type="ChEBI" id="CHEBI:29105"/>
    </ligand>
</feature>
<feature type="binding site" evidence="3">
    <location>
        <position position="364"/>
    </location>
    <ligand>
        <name>Zn(2+)</name>
        <dbReference type="ChEBI" id="CHEBI:29105"/>
    </ligand>
</feature>
<feature type="binding site" evidence="3">
    <location>
        <position position="368"/>
    </location>
    <ligand>
        <name>Zn(2+)</name>
        <dbReference type="ChEBI" id="CHEBI:29105"/>
    </ligand>
</feature>
<feature type="modified residue" description="Phosphohistidine; by autocatalysis" evidence="6">
    <location>
        <position position="385"/>
    </location>
</feature>